<accession>P50531</accession>
<sequence length="606" mass="68882">MRRQLSFHESTKRSLKKKKIRKIEKPSLVSKTSRDKNASITDIHEEDIEAFSDEENKIVHLNNLKEDRFQLWFEKYIPQKAADLAVHKSKISAIKQWMLTDSLESRLLLICGPSGCGKSTAVQVLAKELGYSLIEWLNPMNLKEPSNQESDTLSLTEKFSRFMSLCETYPELELMDSNNIQKRGKNAQGKKKFIFLDEIPHLSKFNGSLDAFRNVIRTALTSRGAFSIIMVLTEIQLNNLEGINSQDRNSFNSVQIMGNDLLQDPRVTVLQFNPIAPTYMKKCLGSILRKEGVPKSPKLLSLVENICSASEGDLRSAINSLQLSISQSFEKKGTKNIREVKEGKGKGNDFSLEAAQVLERLSKSDSEAYARFKNYKSAYIPKSDKNENSFFKKDVGLGMMHAIGKVVWNKREGDDEVLKASSQQTGNSERIKGVKVSKSQENKNCISLKSDQRERMLNVDQCFTSKRRSLVDIESTINQSGLSGSVFRYGLFENYVDSCVTTDEAFNVCDLLSISDCLSHDFPYSYTGDEISTWFSVQGTLFYLPSPVPRKWRQLRFQQWNNEGIVRGIFDDYMVIYGKRSVSDPVIEAHEDQVLEDIDDPIEDED</sequence>
<proteinExistence type="evidence at protein level"/>
<protein>
    <recommendedName>
        <fullName>Checkpoint protein rad17</fullName>
    </recommendedName>
</protein>
<comment type="function">
    <text evidence="4">Participates in checkpoint pathways arrest of the cell cycle. A mechanism that allows the DNA repair pathways to act to restore the integrity of the DNA prior to DNA synthesis or separation of the replicated chromosomes.</text>
</comment>
<comment type="subunit">
    <text evidence="3">Interacts with mug40.</text>
</comment>
<comment type="subcellular location">
    <subcellularLocation>
        <location evidence="4">Nucleus</location>
    </subcellularLocation>
</comment>
<comment type="similarity">
    <text evidence="5">Belongs to the rad17/RAD24 family.</text>
</comment>
<name>RAD17_SCHPO</name>
<feature type="chain" id="PRO_0000209952" description="Checkpoint protein rad17">
    <location>
        <begin position="1"/>
        <end position="606"/>
    </location>
</feature>
<feature type="region of interest" description="Disordered" evidence="2">
    <location>
        <begin position="1"/>
        <end position="21"/>
    </location>
</feature>
<feature type="binding site" evidence="1">
    <location>
        <begin position="112"/>
        <end position="119"/>
    </location>
    <ligand>
        <name>ATP</name>
        <dbReference type="ChEBI" id="CHEBI:30616"/>
    </ligand>
</feature>
<keyword id="KW-0067">ATP-binding</keyword>
<keyword id="KW-0131">Cell cycle</keyword>
<keyword id="KW-0227">DNA damage</keyword>
<keyword id="KW-0547">Nucleotide-binding</keyword>
<keyword id="KW-0539">Nucleus</keyword>
<keyword id="KW-1185">Reference proteome</keyword>
<organism>
    <name type="scientific">Schizosaccharomyces pombe (strain 972 / ATCC 24843)</name>
    <name type="common">Fission yeast</name>
    <dbReference type="NCBI Taxonomy" id="284812"/>
    <lineage>
        <taxon>Eukaryota</taxon>
        <taxon>Fungi</taxon>
        <taxon>Dikarya</taxon>
        <taxon>Ascomycota</taxon>
        <taxon>Taphrinomycotina</taxon>
        <taxon>Schizosaccharomycetes</taxon>
        <taxon>Schizosaccharomycetales</taxon>
        <taxon>Schizosaccharomycetaceae</taxon>
        <taxon>Schizosaccharomyces</taxon>
    </lineage>
</organism>
<reference key="1">
    <citation type="journal article" date="1995" name="EMBO J.">
        <title>Fission yeast rad17: a homologue of budding yeast RAD24 that shares regions of sequence similarity with DNA polymerase accessory proteins.</title>
        <authorList>
            <person name="Griffiths D.J.F."/>
            <person name="Barbet N.C."/>
            <person name="McCready S."/>
            <person name="Lehmann A.R."/>
            <person name="Carr A.M."/>
        </authorList>
    </citation>
    <scope>NUCLEOTIDE SEQUENCE [GENOMIC DNA]</scope>
    <scope>FUNCTION</scope>
    <scope>SUBCELLULAR LOCATION</scope>
</reference>
<reference key="2">
    <citation type="journal article" date="2002" name="Nature">
        <title>The genome sequence of Schizosaccharomyces pombe.</title>
        <authorList>
            <person name="Wood V."/>
            <person name="Gwilliam R."/>
            <person name="Rajandream M.A."/>
            <person name="Lyne M.H."/>
            <person name="Lyne R."/>
            <person name="Stewart A."/>
            <person name="Sgouros J.G."/>
            <person name="Peat N."/>
            <person name="Hayles J."/>
            <person name="Baker S.G."/>
            <person name="Basham D."/>
            <person name="Bowman S."/>
            <person name="Brooks K."/>
            <person name="Brown D."/>
            <person name="Brown S."/>
            <person name="Chillingworth T."/>
            <person name="Churcher C.M."/>
            <person name="Collins M."/>
            <person name="Connor R."/>
            <person name="Cronin A."/>
            <person name="Davis P."/>
            <person name="Feltwell T."/>
            <person name="Fraser A."/>
            <person name="Gentles S."/>
            <person name="Goble A."/>
            <person name="Hamlin N."/>
            <person name="Harris D.E."/>
            <person name="Hidalgo J."/>
            <person name="Hodgson G."/>
            <person name="Holroyd S."/>
            <person name="Hornsby T."/>
            <person name="Howarth S."/>
            <person name="Huckle E.J."/>
            <person name="Hunt S."/>
            <person name="Jagels K."/>
            <person name="James K.D."/>
            <person name="Jones L."/>
            <person name="Jones M."/>
            <person name="Leather S."/>
            <person name="McDonald S."/>
            <person name="McLean J."/>
            <person name="Mooney P."/>
            <person name="Moule S."/>
            <person name="Mungall K.L."/>
            <person name="Murphy L.D."/>
            <person name="Niblett D."/>
            <person name="Odell C."/>
            <person name="Oliver K."/>
            <person name="O'Neil S."/>
            <person name="Pearson D."/>
            <person name="Quail M.A."/>
            <person name="Rabbinowitsch E."/>
            <person name="Rutherford K.M."/>
            <person name="Rutter S."/>
            <person name="Saunders D."/>
            <person name="Seeger K."/>
            <person name="Sharp S."/>
            <person name="Skelton J."/>
            <person name="Simmonds M.N."/>
            <person name="Squares R."/>
            <person name="Squares S."/>
            <person name="Stevens K."/>
            <person name="Taylor K."/>
            <person name="Taylor R.G."/>
            <person name="Tivey A."/>
            <person name="Walsh S.V."/>
            <person name="Warren T."/>
            <person name="Whitehead S."/>
            <person name="Woodward J.R."/>
            <person name="Volckaert G."/>
            <person name="Aert R."/>
            <person name="Robben J."/>
            <person name="Grymonprez B."/>
            <person name="Weltjens I."/>
            <person name="Vanstreels E."/>
            <person name="Rieger M."/>
            <person name="Schaefer M."/>
            <person name="Mueller-Auer S."/>
            <person name="Gabel C."/>
            <person name="Fuchs M."/>
            <person name="Duesterhoeft A."/>
            <person name="Fritzc C."/>
            <person name="Holzer E."/>
            <person name="Moestl D."/>
            <person name="Hilbert H."/>
            <person name="Borzym K."/>
            <person name="Langer I."/>
            <person name="Beck A."/>
            <person name="Lehrach H."/>
            <person name="Reinhardt R."/>
            <person name="Pohl T.M."/>
            <person name="Eger P."/>
            <person name="Zimmermann W."/>
            <person name="Wedler H."/>
            <person name="Wambutt R."/>
            <person name="Purnelle B."/>
            <person name="Goffeau A."/>
            <person name="Cadieu E."/>
            <person name="Dreano S."/>
            <person name="Gloux S."/>
            <person name="Lelaure V."/>
            <person name="Mottier S."/>
            <person name="Galibert F."/>
            <person name="Aves S.J."/>
            <person name="Xiang Z."/>
            <person name="Hunt C."/>
            <person name="Moore K."/>
            <person name="Hurst S.M."/>
            <person name="Lucas M."/>
            <person name="Rochet M."/>
            <person name="Gaillardin C."/>
            <person name="Tallada V.A."/>
            <person name="Garzon A."/>
            <person name="Thode G."/>
            <person name="Daga R.R."/>
            <person name="Cruzado L."/>
            <person name="Jimenez J."/>
            <person name="Sanchez M."/>
            <person name="del Rey F."/>
            <person name="Benito J."/>
            <person name="Dominguez A."/>
            <person name="Revuelta J.L."/>
            <person name="Moreno S."/>
            <person name="Armstrong J."/>
            <person name="Forsburg S.L."/>
            <person name="Cerutti L."/>
            <person name="Lowe T."/>
            <person name="McCombie W.R."/>
            <person name="Paulsen I."/>
            <person name="Potashkin J."/>
            <person name="Shpakovski G.V."/>
            <person name="Ussery D."/>
            <person name="Barrell B.G."/>
            <person name="Nurse P."/>
        </authorList>
    </citation>
    <scope>NUCLEOTIDE SEQUENCE [LARGE SCALE GENOMIC DNA]</scope>
    <source>
        <strain>972 / ATCC 24843</strain>
    </source>
</reference>
<reference key="3">
    <citation type="journal article" date="2003" name="Genes Dev.">
        <title>Checkpoint activation regulates mutagenic translesion synthesis.</title>
        <authorList>
            <person name="Kai M."/>
            <person name="Wang T.S.-F."/>
        </authorList>
    </citation>
    <scope>INTERACTION WITH MUG40</scope>
</reference>
<gene>
    <name type="primary">rad17</name>
    <name type="ORF">SPAC14C4.13</name>
</gene>
<evidence type="ECO:0000255" key="1"/>
<evidence type="ECO:0000256" key="2">
    <source>
        <dbReference type="SAM" id="MobiDB-lite"/>
    </source>
</evidence>
<evidence type="ECO:0000269" key="3">
    <source>
    </source>
</evidence>
<evidence type="ECO:0000269" key="4">
    <source>
    </source>
</evidence>
<evidence type="ECO:0000305" key="5"/>
<dbReference type="EMBL" id="X91889">
    <property type="protein sequence ID" value="CAA62993.1"/>
    <property type="molecule type" value="Genomic_DNA"/>
</dbReference>
<dbReference type="EMBL" id="CU329670">
    <property type="protein sequence ID" value="CAB11206.1"/>
    <property type="molecule type" value="Genomic_DNA"/>
</dbReference>
<dbReference type="PIR" id="S60090">
    <property type="entry name" value="S60090"/>
</dbReference>
<dbReference type="RefSeq" id="NP_594918.1">
    <property type="nucleotide sequence ID" value="NM_001020350.2"/>
</dbReference>
<dbReference type="BioGRID" id="278139">
    <property type="interactions" value="100"/>
</dbReference>
<dbReference type="FunCoup" id="P50531">
    <property type="interactions" value="590"/>
</dbReference>
<dbReference type="STRING" id="284812.P50531"/>
<dbReference type="iPTMnet" id="P50531"/>
<dbReference type="SwissPalm" id="P50531"/>
<dbReference type="PaxDb" id="4896-SPAC14C4.13.1"/>
<dbReference type="EnsemblFungi" id="SPAC14C4.13.1">
    <property type="protein sequence ID" value="SPAC14C4.13.1:pep"/>
    <property type="gene ID" value="SPAC14C4.13"/>
</dbReference>
<dbReference type="GeneID" id="2541643"/>
<dbReference type="KEGG" id="spo:2541643"/>
<dbReference type="PomBase" id="SPAC14C4.13">
    <property type="gene designation" value="rad17"/>
</dbReference>
<dbReference type="VEuPathDB" id="FungiDB:SPAC14C4.13"/>
<dbReference type="eggNOG" id="KOG1970">
    <property type="taxonomic scope" value="Eukaryota"/>
</dbReference>
<dbReference type="HOGENOM" id="CLU_450679_0_0_1"/>
<dbReference type="InParanoid" id="P50531"/>
<dbReference type="OMA" id="ECDALMD"/>
<dbReference type="PhylomeDB" id="P50531"/>
<dbReference type="Reactome" id="R-SPO-176187">
    <property type="pathway name" value="Activation of ATR in response to replication stress"/>
</dbReference>
<dbReference type="PRO" id="PR:P50531"/>
<dbReference type="Proteomes" id="UP000002485">
    <property type="component" value="Chromosome I"/>
</dbReference>
<dbReference type="GO" id="GO:0000785">
    <property type="term" value="C:chromatin"/>
    <property type="evidence" value="ECO:0000314"/>
    <property type="project" value="PomBase"/>
</dbReference>
<dbReference type="GO" id="GO:0140445">
    <property type="term" value="C:chromosome, telomeric repeat region"/>
    <property type="evidence" value="ECO:0000314"/>
    <property type="project" value="PomBase"/>
</dbReference>
<dbReference type="GO" id="GO:0005634">
    <property type="term" value="C:nucleus"/>
    <property type="evidence" value="ECO:0000314"/>
    <property type="project" value="PomBase"/>
</dbReference>
<dbReference type="GO" id="GO:0031389">
    <property type="term" value="C:Rad17 RFC-like complex"/>
    <property type="evidence" value="ECO:0000266"/>
    <property type="project" value="PomBase"/>
</dbReference>
<dbReference type="GO" id="GO:0005524">
    <property type="term" value="F:ATP binding"/>
    <property type="evidence" value="ECO:0000255"/>
    <property type="project" value="PomBase"/>
</dbReference>
<dbReference type="GO" id="GO:0016887">
    <property type="term" value="F:ATP hydrolysis activity"/>
    <property type="evidence" value="ECO:0000305"/>
    <property type="project" value="PomBase"/>
</dbReference>
<dbReference type="GO" id="GO:0003682">
    <property type="term" value="F:chromatin binding"/>
    <property type="evidence" value="ECO:0000314"/>
    <property type="project" value="PomBase"/>
</dbReference>
<dbReference type="GO" id="GO:0003689">
    <property type="term" value="F:DNA clamp loader activity"/>
    <property type="evidence" value="ECO:0007669"/>
    <property type="project" value="InterPro"/>
</dbReference>
<dbReference type="GO" id="GO:0000077">
    <property type="term" value="P:DNA damage checkpoint signaling"/>
    <property type="evidence" value="ECO:0000318"/>
    <property type="project" value="GO_Central"/>
</dbReference>
<dbReference type="GO" id="GO:0006281">
    <property type="term" value="P:DNA repair"/>
    <property type="evidence" value="ECO:0000318"/>
    <property type="project" value="GO_Central"/>
</dbReference>
<dbReference type="GO" id="GO:0033314">
    <property type="term" value="P:mitotic DNA replication checkpoint signaling"/>
    <property type="evidence" value="ECO:0000315"/>
    <property type="project" value="PomBase"/>
</dbReference>
<dbReference type="GO" id="GO:0007095">
    <property type="term" value="P:mitotic G2 DNA damage checkpoint signaling"/>
    <property type="evidence" value="ECO:0000315"/>
    <property type="project" value="PomBase"/>
</dbReference>
<dbReference type="GO" id="GO:0031573">
    <property type="term" value="P:mitotic intra-S DNA damage checkpoint signaling"/>
    <property type="evidence" value="ECO:0000315"/>
    <property type="project" value="PomBase"/>
</dbReference>
<dbReference type="GO" id="GO:0000723">
    <property type="term" value="P:telomere maintenance"/>
    <property type="evidence" value="ECO:0000315"/>
    <property type="project" value="PomBase"/>
</dbReference>
<dbReference type="CDD" id="cd00009">
    <property type="entry name" value="AAA"/>
    <property type="match status" value="1"/>
</dbReference>
<dbReference type="Gene3D" id="1.10.8.60">
    <property type="match status" value="1"/>
</dbReference>
<dbReference type="Gene3D" id="3.40.50.300">
    <property type="entry name" value="P-loop containing nucleotide triphosphate hydrolases"/>
    <property type="match status" value="1"/>
</dbReference>
<dbReference type="InterPro" id="IPR003593">
    <property type="entry name" value="AAA+_ATPase"/>
</dbReference>
<dbReference type="InterPro" id="IPR004582">
    <property type="entry name" value="Checkpoint_prot_Rad17_Rad24"/>
</dbReference>
<dbReference type="InterPro" id="IPR027417">
    <property type="entry name" value="P-loop_NTPase"/>
</dbReference>
<dbReference type="InterPro" id="IPR018324">
    <property type="entry name" value="Rad17/Rad24_fun/met"/>
</dbReference>
<dbReference type="NCBIfam" id="TIGR00602">
    <property type="entry name" value="rad24"/>
    <property type="match status" value="1"/>
</dbReference>
<dbReference type="PANTHER" id="PTHR12172">
    <property type="entry name" value="CELL CYCLE CHECKPOINT PROTEIN RAD17"/>
    <property type="match status" value="1"/>
</dbReference>
<dbReference type="PANTHER" id="PTHR12172:SF0">
    <property type="entry name" value="CELL CYCLE CHECKPOINT PROTEIN RAD17"/>
    <property type="match status" value="1"/>
</dbReference>
<dbReference type="Pfam" id="PF03215">
    <property type="entry name" value="Rad17"/>
    <property type="match status" value="1"/>
</dbReference>
<dbReference type="SMART" id="SM00382">
    <property type="entry name" value="AAA"/>
    <property type="match status" value="1"/>
</dbReference>
<dbReference type="SUPFAM" id="SSF52540">
    <property type="entry name" value="P-loop containing nucleoside triphosphate hydrolases"/>
    <property type="match status" value="1"/>
</dbReference>